<evidence type="ECO:0000255" key="1">
    <source>
        <dbReference type="HAMAP-Rule" id="MF_00294"/>
    </source>
</evidence>
<evidence type="ECO:0000305" key="2"/>
<feature type="chain" id="PRO_1000004147" description="Large ribosomal subunit protein bL33">
    <location>
        <begin position="1"/>
        <end position="55"/>
    </location>
</feature>
<protein>
    <recommendedName>
        <fullName evidence="1">Large ribosomal subunit protein bL33</fullName>
    </recommendedName>
    <alternativeName>
        <fullName evidence="2">50S ribosomal protein L33</fullName>
    </alternativeName>
</protein>
<sequence length="55" mass="6410">MAKAATIKIKLLSTADTGFFYVTKKNSRTMTNKMSKRKYDPVVKRHVEFKETKIK</sequence>
<comment type="similarity">
    <text evidence="1">Belongs to the bacterial ribosomal protein bL33 family.</text>
</comment>
<accession>Q6FZR9</accession>
<reference key="1">
    <citation type="journal article" date="2004" name="Proc. Natl. Acad. Sci. U.S.A.">
        <title>The louse-borne human pathogen Bartonella quintana is a genomic derivative of the zoonotic agent Bartonella henselae.</title>
        <authorList>
            <person name="Alsmark U.C.M."/>
            <person name="Frank A.C."/>
            <person name="Karlberg E.O."/>
            <person name="Legault B.-A."/>
            <person name="Ardell D.H."/>
            <person name="Canbaeck B."/>
            <person name="Eriksson A.-S."/>
            <person name="Naeslund A.K."/>
            <person name="Handley S.A."/>
            <person name="Huvet M."/>
            <person name="La Scola B."/>
            <person name="Holmberg M."/>
            <person name="Andersson S.G.E."/>
        </authorList>
    </citation>
    <scope>NUCLEOTIDE SEQUENCE [LARGE SCALE GENOMIC DNA]</scope>
    <source>
        <strain>Toulouse</strain>
    </source>
</reference>
<dbReference type="EMBL" id="BX897700">
    <property type="protein sequence ID" value="CAF26135.1"/>
    <property type="molecule type" value="Genomic_DNA"/>
</dbReference>
<dbReference type="RefSeq" id="WP_011179398.1">
    <property type="nucleotide sequence ID" value="NC_005955.1"/>
</dbReference>
<dbReference type="SMR" id="Q6FZR9"/>
<dbReference type="GeneID" id="56532996"/>
<dbReference type="KEGG" id="bqu:BQ06440"/>
<dbReference type="eggNOG" id="COG0267">
    <property type="taxonomic scope" value="Bacteria"/>
</dbReference>
<dbReference type="HOGENOM" id="CLU_190949_1_1_5"/>
<dbReference type="OrthoDB" id="21586at2"/>
<dbReference type="Proteomes" id="UP000000597">
    <property type="component" value="Chromosome"/>
</dbReference>
<dbReference type="GO" id="GO:0022625">
    <property type="term" value="C:cytosolic large ribosomal subunit"/>
    <property type="evidence" value="ECO:0007669"/>
    <property type="project" value="TreeGrafter"/>
</dbReference>
<dbReference type="GO" id="GO:0003735">
    <property type="term" value="F:structural constituent of ribosome"/>
    <property type="evidence" value="ECO:0007669"/>
    <property type="project" value="InterPro"/>
</dbReference>
<dbReference type="GO" id="GO:0006412">
    <property type="term" value="P:translation"/>
    <property type="evidence" value="ECO:0007669"/>
    <property type="project" value="UniProtKB-UniRule"/>
</dbReference>
<dbReference type="Gene3D" id="2.20.28.120">
    <property type="entry name" value="Ribosomal protein L33"/>
    <property type="match status" value="1"/>
</dbReference>
<dbReference type="HAMAP" id="MF_00294">
    <property type="entry name" value="Ribosomal_bL33"/>
    <property type="match status" value="1"/>
</dbReference>
<dbReference type="InterPro" id="IPR001705">
    <property type="entry name" value="Ribosomal_bL33"/>
</dbReference>
<dbReference type="InterPro" id="IPR018264">
    <property type="entry name" value="Ribosomal_bL33_CS"/>
</dbReference>
<dbReference type="InterPro" id="IPR038584">
    <property type="entry name" value="Ribosomal_bL33_sf"/>
</dbReference>
<dbReference type="InterPro" id="IPR011332">
    <property type="entry name" value="Ribosomal_zn-bd"/>
</dbReference>
<dbReference type="NCBIfam" id="NF001860">
    <property type="entry name" value="PRK00595.1"/>
    <property type="match status" value="1"/>
</dbReference>
<dbReference type="NCBIfam" id="TIGR01023">
    <property type="entry name" value="rpmG_bact"/>
    <property type="match status" value="1"/>
</dbReference>
<dbReference type="PANTHER" id="PTHR15238">
    <property type="entry name" value="54S RIBOSOMAL PROTEIN L39, MITOCHONDRIAL"/>
    <property type="match status" value="1"/>
</dbReference>
<dbReference type="PANTHER" id="PTHR15238:SF1">
    <property type="entry name" value="LARGE RIBOSOMAL SUBUNIT PROTEIN BL33M"/>
    <property type="match status" value="1"/>
</dbReference>
<dbReference type="Pfam" id="PF00471">
    <property type="entry name" value="Ribosomal_L33"/>
    <property type="match status" value="1"/>
</dbReference>
<dbReference type="SUPFAM" id="SSF57829">
    <property type="entry name" value="Zn-binding ribosomal proteins"/>
    <property type="match status" value="1"/>
</dbReference>
<dbReference type="PROSITE" id="PS00582">
    <property type="entry name" value="RIBOSOMAL_L33"/>
    <property type="match status" value="1"/>
</dbReference>
<gene>
    <name evidence="1" type="primary">rpmG</name>
    <name type="ordered locus">BQ06440</name>
</gene>
<proteinExistence type="inferred from homology"/>
<keyword id="KW-0687">Ribonucleoprotein</keyword>
<keyword id="KW-0689">Ribosomal protein</keyword>
<organism>
    <name type="scientific">Bartonella quintana (strain Toulouse)</name>
    <name type="common">Rochalimaea quintana</name>
    <dbReference type="NCBI Taxonomy" id="283165"/>
    <lineage>
        <taxon>Bacteria</taxon>
        <taxon>Pseudomonadati</taxon>
        <taxon>Pseudomonadota</taxon>
        <taxon>Alphaproteobacteria</taxon>
        <taxon>Hyphomicrobiales</taxon>
        <taxon>Bartonellaceae</taxon>
        <taxon>Bartonella</taxon>
    </lineage>
</organism>
<name>RL33_BARQU</name>